<keyword id="KW-0028">Amino-acid biosynthesis</keyword>
<keyword id="KW-0170">Cobalt</keyword>
<keyword id="KW-0220">Diaminopimelate biosynthesis</keyword>
<keyword id="KW-0378">Hydrolase</keyword>
<keyword id="KW-0457">Lysine biosynthesis</keyword>
<keyword id="KW-0479">Metal-binding</keyword>
<keyword id="KW-0862">Zinc</keyword>
<reference key="1">
    <citation type="submission" date="2008-02" db="EMBL/GenBank/DDBJ databases">
        <title>Complete sequence of Haemophilus somnus 2336.</title>
        <authorList>
            <consortium name="US DOE Joint Genome Institute"/>
            <person name="Siddaramappa S."/>
            <person name="Duncan A.J."/>
            <person name="Challacombe J.F."/>
            <person name="Rainey D."/>
            <person name="Gillaspy A.F."/>
            <person name="Carson M."/>
            <person name="Gipson J."/>
            <person name="Gipson M."/>
            <person name="Bruce D."/>
            <person name="Detter J.C."/>
            <person name="Han C.S."/>
            <person name="Land M."/>
            <person name="Tapia R."/>
            <person name="Thompson L.S."/>
            <person name="Orvis J."/>
            <person name="Zaitshik J."/>
            <person name="Barnes G."/>
            <person name="Brettin T.S."/>
            <person name="Dyer D.W."/>
            <person name="Inzana T.J."/>
        </authorList>
    </citation>
    <scope>NUCLEOTIDE SEQUENCE [LARGE SCALE GENOMIC DNA]</scope>
    <source>
        <strain>2336</strain>
    </source>
</reference>
<evidence type="ECO:0000255" key="1">
    <source>
        <dbReference type="HAMAP-Rule" id="MF_01690"/>
    </source>
</evidence>
<gene>
    <name evidence="1" type="primary">dapE</name>
    <name type="ordered locus">HSM_0927</name>
</gene>
<name>DAPE_HISS2</name>
<protein>
    <recommendedName>
        <fullName evidence="1">Succinyl-diaminopimelate desuccinylase</fullName>
        <shortName evidence="1">SDAP desuccinylase</shortName>
        <ecNumber evidence="1">3.5.1.18</ecNumber>
    </recommendedName>
    <alternativeName>
        <fullName evidence="1">N-succinyl-LL-2,6-diaminoheptanedioate amidohydrolase</fullName>
    </alternativeName>
</protein>
<accession>B0UT10</accession>
<proteinExistence type="inferred from homology"/>
<organism>
    <name type="scientific">Histophilus somni (strain 2336)</name>
    <name type="common">Haemophilus somnus</name>
    <dbReference type="NCBI Taxonomy" id="228400"/>
    <lineage>
        <taxon>Bacteria</taxon>
        <taxon>Pseudomonadati</taxon>
        <taxon>Pseudomonadota</taxon>
        <taxon>Gammaproteobacteria</taxon>
        <taxon>Pasteurellales</taxon>
        <taxon>Pasteurellaceae</taxon>
        <taxon>Histophilus</taxon>
    </lineage>
</organism>
<comment type="function">
    <text evidence="1">Catalyzes the hydrolysis of N-succinyl-L,L-diaminopimelic acid (SDAP), forming succinate and LL-2,6-diaminopimelate (DAP), an intermediate involved in the bacterial biosynthesis of lysine and meso-diaminopimelic acid, an essential component of bacterial cell walls.</text>
</comment>
<comment type="catalytic activity">
    <reaction evidence="1">
        <text>N-succinyl-(2S,6S)-2,6-diaminopimelate + H2O = (2S,6S)-2,6-diaminopimelate + succinate</text>
        <dbReference type="Rhea" id="RHEA:22608"/>
        <dbReference type="ChEBI" id="CHEBI:15377"/>
        <dbReference type="ChEBI" id="CHEBI:30031"/>
        <dbReference type="ChEBI" id="CHEBI:57609"/>
        <dbReference type="ChEBI" id="CHEBI:58087"/>
        <dbReference type="EC" id="3.5.1.18"/>
    </reaction>
</comment>
<comment type="cofactor">
    <cofactor evidence="1">
        <name>Zn(2+)</name>
        <dbReference type="ChEBI" id="CHEBI:29105"/>
    </cofactor>
    <cofactor evidence="1">
        <name>Co(2+)</name>
        <dbReference type="ChEBI" id="CHEBI:48828"/>
    </cofactor>
    <text evidence="1">Binds 2 Zn(2+) or Co(2+) ions per subunit.</text>
</comment>
<comment type="pathway">
    <text evidence="1">Amino-acid biosynthesis; L-lysine biosynthesis via DAP pathway; LL-2,6-diaminopimelate from (S)-tetrahydrodipicolinate (succinylase route): step 3/3.</text>
</comment>
<comment type="subunit">
    <text evidence="1">Homodimer.</text>
</comment>
<comment type="similarity">
    <text evidence="1">Belongs to the peptidase M20A family. DapE subfamily.</text>
</comment>
<feature type="chain" id="PRO_0000375581" description="Succinyl-diaminopimelate desuccinylase">
    <location>
        <begin position="1"/>
        <end position="377"/>
    </location>
</feature>
<feature type="active site" evidence="1">
    <location>
        <position position="68"/>
    </location>
</feature>
<feature type="active site" description="Proton acceptor" evidence="1">
    <location>
        <position position="133"/>
    </location>
</feature>
<feature type="binding site" evidence="1">
    <location>
        <position position="66"/>
    </location>
    <ligand>
        <name>Zn(2+)</name>
        <dbReference type="ChEBI" id="CHEBI:29105"/>
        <label>1</label>
    </ligand>
</feature>
<feature type="binding site" evidence="1">
    <location>
        <position position="99"/>
    </location>
    <ligand>
        <name>Zn(2+)</name>
        <dbReference type="ChEBI" id="CHEBI:29105"/>
        <label>1</label>
    </ligand>
</feature>
<feature type="binding site" evidence="1">
    <location>
        <position position="99"/>
    </location>
    <ligand>
        <name>Zn(2+)</name>
        <dbReference type="ChEBI" id="CHEBI:29105"/>
        <label>2</label>
    </ligand>
</feature>
<feature type="binding site" evidence="1">
    <location>
        <position position="134"/>
    </location>
    <ligand>
        <name>Zn(2+)</name>
        <dbReference type="ChEBI" id="CHEBI:29105"/>
        <label>2</label>
    </ligand>
</feature>
<feature type="binding site" evidence="1">
    <location>
        <position position="162"/>
    </location>
    <ligand>
        <name>Zn(2+)</name>
        <dbReference type="ChEBI" id="CHEBI:29105"/>
        <label>1</label>
    </ligand>
</feature>
<feature type="binding site" evidence="1">
    <location>
        <position position="348"/>
    </location>
    <ligand>
        <name>Zn(2+)</name>
        <dbReference type="ChEBI" id="CHEBI:29105"/>
        <label>2</label>
    </ligand>
</feature>
<dbReference type="EC" id="3.5.1.18" evidence="1"/>
<dbReference type="EMBL" id="CP000947">
    <property type="protein sequence ID" value="ACA32609.1"/>
    <property type="molecule type" value="Genomic_DNA"/>
</dbReference>
<dbReference type="RefSeq" id="WP_012341734.1">
    <property type="nucleotide sequence ID" value="NC_010519.1"/>
</dbReference>
<dbReference type="SMR" id="B0UT10"/>
<dbReference type="STRING" id="228400.HSM_0927"/>
<dbReference type="GeneID" id="31487226"/>
<dbReference type="KEGG" id="hsm:HSM_0927"/>
<dbReference type="HOGENOM" id="CLU_021802_4_0_6"/>
<dbReference type="UniPathway" id="UPA00034">
    <property type="reaction ID" value="UER00021"/>
</dbReference>
<dbReference type="GO" id="GO:0008777">
    <property type="term" value="F:acetylornithine deacetylase activity"/>
    <property type="evidence" value="ECO:0007669"/>
    <property type="project" value="TreeGrafter"/>
</dbReference>
<dbReference type="GO" id="GO:0050897">
    <property type="term" value="F:cobalt ion binding"/>
    <property type="evidence" value="ECO:0007669"/>
    <property type="project" value="UniProtKB-UniRule"/>
</dbReference>
<dbReference type="GO" id="GO:0009014">
    <property type="term" value="F:succinyl-diaminopimelate desuccinylase activity"/>
    <property type="evidence" value="ECO:0007669"/>
    <property type="project" value="UniProtKB-UniRule"/>
</dbReference>
<dbReference type="GO" id="GO:0008270">
    <property type="term" value="F:zinc ion binding"/>
    <property type="evidence" value="ECO:0007669"/>
    <property type="project" value="UniProtKB-UniRule"/>
</dbReference>
<dbReference type="GO" id="GO:0019877">
    <property type="term" value="P:diaminopimelate biosynthetic process"/>
    <property type="evidence" value="ECO:0007669"/>
    <property type="project" value="UniProtKB-UniRule"/>
</dbReference>
<dbReference type="GO" id="GO:0006526">
    <property type="term" value="P:L-arginine biosynthetic process"/>
    <property type="evidence" value="ECO:0007669"/>
    <property type="project" value="TreeGrafter"/>
</dbReference>
<dbReference type="GO" id="GO:0009089">
    <property type="term" value="P:lysine biosynthetic process via diaminopimelate"/>
    <property type="evidence" value="ECO:0007669"/>
    <property type="project" value="UniProtKB-UniRule"/>
</dbReference>
<dbReference type="CDD" id="cd03891">
    <property type="entry name" value="M20_DapE_proteobac"/>
    <property type="match status" value="1"/>
</dbReference>
<dbReference type="FunFam" id="3.30.70.360:FF:000011">
    <property type="entry name" value="Succinyl-diaminopimelate desuccinylase"/>
    <property type="match status" value="1"/>
</dbReference>
<dbReference type="FunFam" id="3.40.630.10:FF:000005">
    <property type="entry name" value="Succinyl-diaminopimelate desuccinylase"/>
    <property type="match status" value="1"/>
</dbReference>
<dbReference type="Gene3D" id="1.10.150.900">
    <property type="match status" value="1"/>
</dbReference>
<dbReference type="Gene3D" id="3.30.70.360">
    <property type="match status" value="1"/>
</dbReference>
<dbReference type="Gene3D" id="3.40.630.10">
    <property type="entry name" value="Zn peptidases"/>
    <property type="match status" value="1"/>
</dbReference>
<dbReference type="HAMAP" id="MF_01690">
    <property type="entry name" value="DapE"/>
    <property type="match status" value="1"/>
</dbReference>
<dbReference type="InterPro" id="IPR001261">
    <property type="entry name" value="ArgE/DapE_CS"/>
</dbReference>
<dbReference type="InterPro" id="IPR036264">
    <property type="entry name" value="Bact_exopeptidase_dim_dom"/>
</dbReference>
<dbReference type="InterPro" id="IPR005941">
    <property type="entry name" value="DapE_proteobac"/>
</dbReference>
<dbReference type="InterPro" id="IPR002933">
    <property type="entry name" value="Peptidase_M20"/>
</dbReference>
<dbReference type="InterPro" id="IPR011650">
    <property type="entry name" value="Peptidase_M20_dimer"/>
</dbReference>
<dbReference type="InterPro" id="IPR050072">
    <property type="entry name" value="Peptidase_M20A"/>
</dbReference>
<dbReference type="NCBIfam" id="TIGR01246">
    <property type="entry name" value="dapE_proteo"/>
    <property type="match status" value="1"/>
</dbReference>
<dbReference type="NCBIfam" id="NF009557">
    <property type="entry name" value="PRK13009.1"/>
    <property type="match status" value="1"/>
</dbReference>
<dbReference type="PANTHER" id="PTHR43808">
    <property type="entry name" value="ACETYLORNITHINE DEACETYLASE"/>
    <property type="match status" value="1"/>
</dbReference>
<dbReference type="PANTHER" id="PTHR43808:SF31">
    <property type="entry name" value="N-ACETYL-L-CITRULLINE DEACETYLASE"/>
    <property type="match status" value="1"/>
</dbReference>
<dbReference type="Pfam" id="PF07687">
    <property type="entry name" value="M20_dimer"/>
    <property type="match status" value="1"/>
</dbReference>
<dbReference type="Pfam" id="PF01546">
    <property type="entry name" value="Peptidase_M20"/>
    <property type="match status" value="1"/>
</dbReference>
<dbReference type="SUPFAM" id="SSF55031">
    <property type="entry name" value="Bacterial exopeptidase dimerisation domain"/>
    <property type="match status" value="1"/>
</dbReference>
<dbReference type="SUPFAM" id="SSF53187">
    <property type="entry name" value="Zn-dependent exopeptidases"/>
    <property type="match status" value="1"/>
</dbReference>
<dbReference type="PROSITE" id="PS00758">
    <property type="entry name" value="ARGE_DAPE_CPG2_1"/>
    <property type="match status" value="1"/>
</dbReference>
<sequence length="377" mass="41799">MKNNIITLTQSLIQRPSISPDDQGCQQLIAERLQAVGFKLEWLPFGDTLNLWATHGEGKCIAFAGHTDVVPIGNESQWTYPPFEARIVENMLYGRGAADMKGALAAMVIAAETFVKHLPNHQGKIALLITSDEEAAATNGTVKVVETLIKRNEKIDYCVVGEPSSATQFGDIIKNGRRGSITGNLYIQGVQGHVAYPHLADNPVHNALKFLDELTHYQWDKGNEFFPPTSLQIANIHAGTGSNNVIPGELYVQFNLRYCTEVTDEIIKTKVAEMLEKHKLTYRIDWNLSGKPFLTPQGKLVNATIEAVKKFTQIRPHLDTGGGTSDARFIATMGAEVVEFGPLNQTIHKVNECVNIDDLAKCGEIYYYILEKLFNEQ</sequence>